<sequence length="549" mass="60623">MEADFVIIGSGSAGSAMAYRLSEDGRYSVIVIEYGVPDVGPLIQMPAALSFPMNMETYDWGFSSEPEPHIGGRSLVTPRGKVLGGSSSINGMVYVRGHACDFDHWSQSGARGWAYADVLPYFKRMENSQGGQEGWRGTNGPLYVQRGKRDNPLFHAFVEAGHQAGFEVTDDYNGEKQEGFGPMEQTIHNGRRWSAANAYLKPALKRPNVKLVKGFARKIVLEGKRAVGVEIEAGRTFSTIRARREVIIAASSINSPKLLMLSGIGPAAHLKEHGIDLVADRPGVGQNLQDHLEVYIQQECTQPITLYSKLNLFSKARIGVEWLLFKTGDGATNHFESAAFVRSKAGVEYPDIQYHFLPVAIRYDGKAAAQSHGFQAHVGPMRSKSRGSVTLRSANPREKPVIKFNYMSHEDDWADFRHCVRLTREIFGQAAFDPYRGAEIQPGAHVQTDDEIDNFIREHVESAFHPCGTCKMGAVDDPMAVVDPECRVIGVEGLRVADSSIFPRITNGNLNGPSIMVGEKASDHILGRTPLARSNQEPWINPRWQVSDR</sequence>
<reference key="1">
    <citation type="submission" date="2007-12" db="EMBL/GenBank/DDBJ databases">
        <title>Brucella suis ATCC 23445 whole genome shotgun sequencing project.</title>
        <authorList>
            <person name="Setubal J.C."/>
            <person name="Bowns C."/>
            <person name="Boyle S."/>
            <person name="Crasta O.R."/>
            <person name="Czar M.J."/>
            <person name="Dharmanolla C."/>
            <person name="Gillespie J.J."/>
            <person name="Kenyon R.W."/>
            <person name="Lu J."/>
            <person name="Mane S."/>
            <person name="Mohapatra S."/>
            <person name="Nagrani S."/>
            <person name="Purkayastha A."/>
            <person name="Rajasimha H.K."/>
            <person name="Shallom J.M."/>
            <person name="Shallom S."/>
            <person name="Shukla M."/>
            <person name="Snyder E.E."/>
            <person name="Sobral B.W."/>
            <person name="Wattam A.R."/>
            <person name="Will R."/>
            <person name="Williams K."/>
            <person name="Yoo H."/>
            <person name="Bruce D."/>
            <person name="Detter C."/>
            <person name="Munk C."/>
            <person name="Brettin T.S."/>
        </authorList>
    </citation>
    <scope>NUCLEOTIDE SEQUENCE [LARGE SCALE GENOMIC DNA]</scope>
    <source>
        <strain>ATCC 23445 / NCTC 10510</strain>
    </source>
</reference>
<gene>
    <name evidence="1" type="primary">betA</name>
    <name type="ordered locus">BSUIS_A0581</name>
</gene>
<protein>
    <recommendedName>
        <fullName evidence="1">Oxygen-dependent choline dehydrogenase</fullName>
        <shortName evidence="1">CDH</shortName>
        <shortName evidence="1">CHD</shortName>
        <ecNumber evidence="1">1.1.99.1</ecNumber>
    </recommendedName>
    <alternativeName>
        <fullName evidence="1">Betaine aldehyde dehydrogenase</fullName>
        <shortName evidence="1">BADH</shortName>
        <ecNumber evidence="1">1.2.1.8</ecNumber>
    </alternativeName>
</protein>
<organism>
    <name type="scientific">Brucella suis (strain ATCC 23445 / NCTC 10510)</name>
    <dbReference type="NCBI Taxonomy" id="470137"/>
    <lineage>
        <taxon>Bacteria</taxon>
        <taxon>Pseudomonadati</taxon>
        <taxon>Pseudomonadota</taxon>
        <taxon>Alphaproteobacteria</taxon>
        <taxon>Hyphomicrobiales</taxon>
        <taxon>Brucellaceae</taxon>
        <taxon>Brucella/Ochrobactrum group</taxon>
        <taxon>Brucella</taxon>
    </lineage>
</organism>
<feature type="chain" id="PRO_1000083493" description="Oxygen-dependent choline dehydrogenase">
    <location>
        <begin position="1"/>
        <end position="549"/>
    </location>
</feature>
<feature type="active site" description="Proton acceptor" evidence="1">
    <location>
        <position position="465"/>
    </location>
</feature>
<feature type="binding site" evidence="1">
    <location>
        <begin position="4"/>
        <end position="33"/>
    </location>
    <ligand>
        <name>FAD</name>
        <dbReference type="ChEBI" id="CHEBI:57692"/>
    </ligand>
</feature>
<dbReference type="EC" id="1.1.99.1" evidence="1"/>
<dbReference type="EC" id="1.2.1.8" evidence="1"/>
<dbReference type="EMBL" id="CP000911">
    <property type="protein sequence ID" value="ABY37664.1"/>
    <property type="molecule type" value="Genomic_DNA"/>
</dbReference>
<dbReference type="RefSeq" id="WP_004689534.1">
    <property type="nucleotide sequence ID" value="NC_010169.1"/>
</dbReference>
<dbReference type="SMR" id="B0CKN4"/>
<dbReference type="CAZy" id="AA3">
    <property type="family name" value="Auxiliary Activities 3"/>
</dbReference>
<dbReference type="GeneID" id="45124016"/>
<dbReference type="KEGG" id="bmt:BSUIS_A0581"/>
<dbReference type="HOGENOM" id="CLU_002865_7_1_5"/>
<dbReference type="UniPathway" id="UPA00529">
    <property type="reaction ID" value="UER00385"/>
</dbReference>
<dbReference type="Proteomes" id="UP000008545">
    <property type="component" value="Chromosome I"/>
</dbReference>
<dbReference type="GO" id="GO:0008802">
    <property type="term" value="F:betaine-aldehyde dehydrogenase (NAD+) activity"/>
    <property type="evidence" value="ECO:0007669"/>
    <property type="project" value="UniProtKB-EC"/>
</dbReference>
<dbReference type="GO" id="GO:0008812">
    <property type="term" value="F:choline dehydrogenase activity"/>
    <property type="evidence" value="ECO:0007669"/>
    <property type="project" value="UniProtKB-UniRule"/>
</dbReference>
<dbReference type="GO" id="GO:0050660">
    <property type="term" value="F:flavin adenine dinucleotide binding"/>
    <property type="evidence" value="ECO:0007669"/>
    <property type="project" value="InterPro"/>
</dbReference>
<dbReference type="GO" id="GO:0019285">
    <property type="term" value="P:glycine betaine biosynthetic process from choline"/>
    <property type="evidence" value="ECO:0007669"/>
    <property type="project" value="UniProtKB-UniRule"/>
</dbReference>
<dbReference type="Gene3D" id="3.50.50.60">
    <property type="entry name" value="FAD/NAD(P)-binding domain"/>
    <property type="match status" value="1"/>
</dbReference>
<dbReference type="Gene3D" id="3.30.560.10">
    <property type="entry name" value="Glucose Oxidase, domain 3"/>
    <property type="match status" value="1"/>
</dbReference>
<dbReference type="HAMAP" id="MF_00750">
    <property type="entry name" value="Choline_dehydrogen"/>
    <property type="match status" value="1"/>
</dbReference>
<dbReference type="InterPro" id="IPR011533">
    <property type="entry name" value="BetA"/>
</dbReference>
<dbReference type="InterPro" id="IPR036188">
    <property type="entry name" value="FAD/NAD-bd_sf"/>
</dbReference>
<dbReference type="InterPro" id="IPR012132">
    <property type="entry name" value="GMC_OxRdtase"/>
</dbReference>
<dbReference type="InterPro" id="IPR000172">
    <property type="entry name" value="GMC_OxRdtase_N"/>
</dbReference>
<dbReference type="InterPro" id="IPR007867">
    <property type="entry name" value="GMC_OxRtase_C"/>
</dbReference>
<dbReference type="NCBIfam" id="TIGR01810">
    <property type="entry name" value="betA"/>
    <property type="match status" value="1"/>
</dbReference>
<dbReference type="NCBIfam" id="NF002550">
    <property type="entry name" value="PRK02106.1"/>
    <property type="match status" value="1"/>
</dbReference>
<dbReference type="PANTHER" id="PTHR11552:SF147">
    <property type="entry name" value="CHOLINE DEHYDROGENASE, MITOCHONDRIAL"/>
    <property type="match status" value="1"/>
</dbReference>
<dbReference type="PANTHER" id="PTHR11552">
    <property type="entry name" value="GLUCOSE-METHANOL-CHOLINE GMC OXIDOREDUCTASE"/>
    <property type="match status" value="1"/>
</dbReference>
<dbReference type="Pfam" id="PF05199">
    <property type="entry name" value="GMC_oxred_C"/>
    <property type="match status" value="1"/>
</dbReference>
<dbReference type="Pfam" id="PF00732">
    <property type="entry name" value="GMC_oxred_N"/>
    <property type="match status" value="1"/>
</dbReference>
<dbReference type="PIRSF" id="PIRSF000137">
    <property type="entry name" value="Alcohol_oxidase"/>
    <property type="match status" value="1"/>
</dbReference>
<dbReference type="SUPFAM" id="SSF54373">
    <property type="entry name" value="FAD-linked reductases, C-terminal domain"/>
    <property type="match status" value="1"/>
</dbReference>
<dbReference type="SUPFAM" id="SSF51905">
    <property type="entry name" value="FAD/NAD(P)-binding domain"/>
    <property type="match status" value="1"/>
</dbReference>
<dbReference type="PROSITE" id="PS00623">
    <property type="entry name" value="GMC_OXRED_1"/>
    <property type="match status" value="1"/>
</dbReference>
<dbReference type="PROSITE" id="PS00624">
    <property type="entry name" value="GMC_OXRED_2"/>
    <property type="match status" value="1"/>
</dbReference>
<proteinExistence type="inferred from homology"/>
<accession>B0CKN4</accession>
<evidence type="ECO:0000255" key="1">
    <source>
        <dbReference type="HAMAP-Rule" id="MF_00750"/>
    </source>
</evidence>
<name>BETA_BRUSI</name>
<keyword id="KW-0274">FAD</keyword>
<keyword id="KW-0285">Flavoprotein</keyword>
<keyword id="KW-0520">NAD</keyword>
<keyword id="KW-0560">Oxidoreductase</keyword>
<comment type="function">
    <text evidence="1">Involved in the biosynthesis of the osmoprotectant glycine betaine. Catalyzes the oxidation of choline to betaine aldehyde and betaine aldehyde to glycine betaine at the same rate.</text>
</comment>
<comment type="catalytic activity">
    <reaction evidence="1">
        <text>choline + A = betaine aldehyde + AH2</text>
        <dbReference type="Rhea" id="RHEA:17433"/>
        <dbReference type="ChEBI" id="CHEBI:13193"/>
        <dbReference type="ChEBI" id="CHEBI:15354"/>
        <dbReference type="ChEBI" id="CHEBI:15710"/>
        <dbReference type="ChEBI" id="CHEBI:17499"/>
        <dbReference type="EC" id="1.1.99.1"/>
    </reaction>
</comment>
<comment type="catalytic activity">
    <reaction evidence="1">
        <text>betaine aldehyde + NAD(+) + H2O = glycine betaine + NADH + 2 H(+)</text>
        <dbReference type="Rhea" id="RHEA:15305"/>
        <dbReference type="ChEBI" id="CHEBI:15377"/>
        <dbReference type="ChEBI" id="CHEBI:15378"/>
        <dbReference type="ChEBI" id="CHEBI:15710"/>
        <dbReference type="ChEBI" id="CHEBI:17750"/>
        <dbReference type="ChEBI" id="CHEBI:57540"/>
        <dbReference type="ChEBI" id="CHEBI:57945"/>
        <dbReference type="EC" id="1.2.1.8"/>
    </reaction>
</comment>
<comment type="cofactor">
    <cofactor evidence="1">
        <name>FAD</name>
        <dbReference type="ChEBI" id="CHEBI:57692"/>
    </cofactor>
</comment>
<comment type="pathway">
    <text evidence="1">Amine and polyamine biosynthesis; betaine biosynthesis via choline pathway; betaine aldehyde from choline (cytochrome c reductase route): step 1/1.</text>
</comment>
<comment type="similarity">
    <text evidence="1">Belongs to the GMC oxidoreductase family.</text>
</comment>